<proteinExistence type="uncertain"/>
<protein>
    <recommendedName>
        <fullName>Putative uncharacterized protein FLJ45721</fullName>
    </recommendedName>
</protein>
<feature type="chain" id="PRO_0000342463" description="Putative uncharacterized protein FLJ45721">
    <location>
        <begin position="1"/>
        <end position="163"/>
    </location>
</feature>
<feature type="sequence conflict" description="In Ref. 1; AK127623." evidence="1" ref="1">
    <original>G</original>
    <variation>S</variation>
    <location>
        <position position="148"/>
    </location>
</feature>
<reference key="1">
    <citation type="journal article" date="2004" name="Nat. Genet.">
        <title>Complete sequencing and characterization of 21,243 full-length human cDNAs.</title>
        <authorList>
            <person name="Ota T."/>
            <person name="Suzuki Y."/>
            <person name="Nishikawa T."/>
            <person name="Otsuki T."/>
            <person name="Sugiyama T."/>
            <person name="Irie R."/>
            <person name="Wakamatsu A."/>
            <person name="Hayashi K."/>
            <person name="Sato H."/>
            <person name="Nagai K."/>
            <person name="Kimura K."/>
            <person name="Makita H."/>
            <person name="Sekine M."/>
            <person name="Obayashi M."/>
            <person name="Nishi T."/>
            <person name="Shibahara T."/>
            <person name="Tanaka T."/>
            <person name="Ishii S."/>
            <person name="Yamamoto J."/>
            <person name="Saito K."/>
            <person name="Kawai Y."/>
            <person name="Isono Y."/>
            <person name="Nakamura Y."/>
            <person name="Nagahari K."/>
            <person name="Murakami K."/>
            <person name="Yasuda T."/>
            <person name="Iwayanagi T."/>
            <person name="Wagatsuma M."/>
            <person name="Shiratori A."/>
            <person name="Sudo H."/>
            <person name="Hosoiri T."/>
            <person name="Kaku Y."/>
            <person name="Kodaira H."/>
            <person name="Kondo H."/>
            <person name="Sugawara M."/>
            <person name="Takahashi M."/>
            <person name="Kanda K."/>
            <person name="Yokoi T."/>
            <person name="Furuya T."/>
            <person name="Kikkawa E."/>
            <person name="Omura Y."/>
            <person name="Abe K."/>
            <person name="Kamihara K."/>
            <person name="Katsuta N."/>
            <person name="Sato K."/>
            <person name="Tanikawa M."/>
            <person name="Yamazaki M."/>
            <person name="Ninomiya K."/>
            <person name="Ishibashi T."/>
            <person name="Yamashita H."/>
            <person name="Murakawa K."/>
            <person name="Fujimori K."/>
            <person name="Tanai H."/>
            <person name="Kimata M."/>
            <person name="Watanabe M."/>
            <person name="Hiraoka S."/>
            <person name="Chiba Y."/>
            <person name="Ishida S."/>
            <person name="Ono Y."/>
            <person name="Takiguchi S."/>
            <person name="Watanabe S."/>
            <person name="Yosida M."/>
            <person name="Hotuta T."/>
            <person name="Kusano J."/>
            <person name="Kanehori K."/>
            <person name="Takahashi-Fujii A."/>
            <person name="Hara H."/>
            <person name="Tanase T.-O."/>
            <person name="Nomura Y."/>
            <person name="Togiya S."/>
            <person name="Komai F."/>
            <person name="Hara R."/>
            <person name="Takeuchi K."/>
            <person name="Arita M."/>
            <person name="Imose N."/>
            <person name="Musashino K."/>
            <person name="Yuuki H."/>
            <person name="Oshima A."/>
            <person name="Sasaki N."/>
            <person name="Aotsuka S."/>
            <person name="Yoshikawa Y."/>
            <person name="Matsunawa H."/>
            <person name="Ichihara T."/>
            <person name="Shiohata N."/>
            <person name="Sano S."/>
            <person name="Moriya S."/>
            <person name="Momiyama H."/>
            <person name="Satoh N."/>
            <person name="Takami S."/>
            <person name="Terashima Y."/>
            <person name="Suzuki O."/>
            <person name="Nakagawa S."/>
            <person name="Senoh A."/>
            <person name="Mizoguchi H."/>
            <person name="Goto Y."/>
            <person name="Shimizu F."/>
            <person name="Wakebe H."/>
            <person name="Hishigaki H."/>
            <person name="Watanabe T."/>
            <person name="Sugiyama A."/>
            <person name="Takemoto M."/>
            <person name="Kawakami B."/>
            <person name="Yamazaki M."/>
            <person name="Watanabe K."/>
            <person name="Kumagai A."/>
            <person name="Itakura S."/>
            <person name="Fukuzumi Y."/>
            <person name="Fujimori Y."/>
            <person name="Komiyama M."/>
            <person name="Tashiro H."/>
            <person name="Tanigami A."/>
            <person name="Fujiwara T."/>
            <person name="Ono T."/>
            <person name="Yamada K."/>
            <person name="Fujii Y."/>
            <person name="Ozaki K."/>
            <person name="Hirao M."/>
            <person name="Ohmori Y."/>
            <person name="Kawabata A."/>
            <person name="Hikiji T."/>
            <person name="Kobatake N."/>
            <person name="Inagaki H."/>
            <person name="Ikema Y."/>
            <person name="Okamoto S."/>
            <person name="Okitani R."/>
            <person name="Kawakami T."/>
            <person name="Noguchi S."/>
            <person name="Itoh T."/>
            <person name="Shigeta K."/>
            <person name="Senba T."/>
            <person name="Matsumura K."/>
            <person name="Nakajima Y."/>
            <person name="Mizuno T."/>
            <person name="Morinaga M."/>
            <person name="Sasaki M."/>
            <person name="Togashi T."/>
            <person name="Oyama M."/>
            <person name="Hata H."/>
            <person name="Watanabe M."/>
            <person name="Komatsu T."/>
            <person name="Mizushima-Sugano J."/>
            <person name="Satoh T."/>
            <person name="Shirai Y."/>
            <person name="Takahashi Y."/>
            <person name="Nakagawa K."/>
            <person name="Okumura K."/>
            <person name="Nagase T."/>
            <person name="Nomura N."/>
            <person name="Kikuchi H."/>
            <person name="Masuho Y."/>
            <person name="Yamashita R."/>
            <person name="Nakai K."/>
            <person name="Yada T."/>
            <person name="Nakamura Y."/>
            <person name="Ohara O."/>
            <person name="Isogai T."/>
            <person name="Sugano S."/>
        </authorList>
    </citation>
    <scope>NUCLEOTIDE SEQUENCE [LARGE SCALE MRNA]</scope>
</reference>
<reference key="2">
    <citation type="journal article" date="2005" name="Nature">
        <title>Generation and annotation of the DNA sequences of human chromosomes 2 and 4.</title>
        <authorList>
            <person name="Hillier L.W."/>
            <person name="Graves T.A."/>
            <person name="Fulton R.S."/>
            <person name="Fulton L.A."/>
            <person name="Pepin K.H."/>
            <person name="Minx P."/>
            <person name="Wagner-McPherson C."/>
            <person name="Layman D."/>
            <person name="Wylie K."/>
            <person name="Sekhon M."/>
            <person name="Becker M.C."/>
            <person name="Fewell G.A."/>
            <person name="Delehaunty K.D."/>
            <person name="Miner T.L."/>
            <person name="Nash W.E."/>
            <person name="Kremitzki C."/>
            <person name="Oddy L."/>
            <person name="Du H."/>
            <person name="Sun H."/>
            <person name="Bradshaw-Cordum H."/>
            <person name="Ali J."/>
            <person name="Carter J."/>
            <person name="Cordes M."/>
            <person name="Harris A."/>
            <person name="Isak A."/>
            <person name="van Brunt A."/>
            <person name="Nguyen C."/>
            <person name="Du F."/>
            <person name="Courtney L."/>
            <person name="Kalicki J."/>
            <person name="Ozersky P."/>
            <person name="Abbott S."/>
            <person name="Armstrong J."/>
            <person name="Belter E.A."/>
            <person name="Caruso L."/>
            <person name="Cedroni M."/>
            <person name="Cotton M."/>
            <person name="Davidson T."/>
            <person name="Desai A."/>
            <person name="Elliott G."/>
            <person name="Erb T."/>
            <person name="Fronick C."/>
            <person name="Gaige T."/>
            <person name="Haakenson W."/>
            <person name="Haglund K."/>
            <person name="Holmes A."/>
            <person name="Harkins R."/>
            <person name="Kim K."/>
            <person name="Kruchowski S.S."/>
            <person name="Strong C.M."/>
            <person name="Grewal N."/>
            <person name="Goyea E."/>
            <person name="Hou S."/>
            <person name="Levy A."/>
            <person name="Martinka S."/>
            <person name="Mead K."/>
            <person name="McLellan M.D."/>
            <person name="Meyer R."/>
            <person name="Randall-Maher J."/>
            <person name="Tomlinson C."/>
            <person name="Dauphin-Kohlberg S."/>
            <person name="Kozlowicz-Reilly A."/>
            <person name="Shah N."/>
            <person name="Swearengen-Shahid S."/>
            <person name="Snider J."/>
            <person name="Strong J.T."/>
            <person name="Thompson J."/>
            <person name="Yoakum M."/>
            <person name="Leonard S."/>
            <person name="Pearman C."/>
            <person name="Trani L."/>
            <person name="Radionenko M."/>
            <person name="Waligorski J.E."/>
            <person name="Wang C."/>
            <person name="Rock S.M."/>
            <person name="Tin-Wollam A.-M."/>
            <person name="Maupin R."/>
            <person name="Latreille P."/>
            <person name="Wendl M.C."/>
            <person name="Yang S.-P."/>
            <person name="Pohl C."/>
            <person name="Wallis J.W."/>
            <person name="Spieth J."/>
            <person name="Bieri T.A."/>
            <person name="Berkowicz N."/>
            <person name="Nelson J.O."/>
            <person name="Osborne J."/>
            <person name="Ding L."/>
            <person name="Meyer R."/>
            <person name="Sabo A."/>
            <person name="Shotland Y."/>
            <person name="Sinha P."/>
            <person name="Wohldmann P.E."/>
            <person name="Cook L.L."/>
            <person name="Hickenbotham M.T."/>
            <person name="Eldred J."/>
            <person name="Williams D."/>
            <person name="Jones T.A."/>
            <person name="She X."/>
            <person name="Ciccarelli F.D."/>
            <person name="Izaurralde E."/>
            <person name="Taylor J."/>
            <person name="Schmutz J."/>
            <person name="Myers R.M."/>
            <person name="Cox D.R."/>
            <person name="Huang X."/>
            <person name="McPherson J.D."/>
            <person name="Mardis E.R."/>
            <person name="Clifton S.W."/>
            <person name="Warren W.C."/>
            <person name="Chinwalla A.T."/>
            <person name="Eddy S.R."/>
            <person name="Marra M.A."/>
            <person name="Ovcharenko I."/>
            <person name="Furey T.S."/>
            <person name="Miller W."/>
            <person name="Eichler E.E."/>
            <person name="Bork P."/>
            <person name="Suyama M."/>
            <person name="Torrents D."/>
            <person name="Waterston R.H."/>
            <person name="Wilson R.K."/>
        </authorList>
    </citation>
    <scope>NUCLEOTIDE SEQUENCE [LARGE SCALE GENOMIC DNA]</scope>
</reference>
<accession>Q6ZS92</accession>
<sequence length="163" mass="18106">MCMNTSIHAHTYARTHTHSVFMSSNVTVFQWMRLMRASSRSFTQAIPAGQLLQTACSHLFTTQNTCQNALGNNTRLQHTEKVRLSIGLADFGLPGIARNTFVVPDSISRYCREGSVIGKCCPSRKSALLNKQGSLKKFKITRGETQPGVTISVLELAEIDQRF</sequence>
<evidence type="ECO:0000305" key="1"/>
<comment type="caution">
    <text evidence="1">Product of a dubious CDS prediction.</text>
</comment>
<organism>
    <name type="scientific">Homo sapiens</name>
    <name type="common">Human</name>
    <dbReference type="NCBI Taxonomy" id="9606"/>
    <lineage>
        <taxon>Eukaryota</taxon>
        <taxon>Metazoa</taxon>
        <taxon>Chordata</taxon>
        <taxon>Craniata</taxon>
        <taxon>Vertebrata</taxon>
        <taxon>Euteleostomi</taxon>
        <taxon>Mammalia</taxon>
        <taxon>Eutheria</taxon>
        <taxon>Euarchontoglires</taxon>
        <taxon>Primates</taxon>
        <taxon>Haplorrhini</taxon>
        <taxon>Catarrhini</taxon>
        <taxon>Hominidae</taxon>
        <taxon>Homo</taxon>
    </lineage>
</organism>
<name>YD022_HUMAN</name>
<keyword id="KW-1185">Reference proteome</keyword>
<dbReference type="EMBL" id="AK127623">
    <property type="status" value="NOT_ANNOTATED_CDS"/>
    <property type="molecule type" value="mRNA"/>
</dbReference>
<dbReference type="EMBL" id="AC024132">
    <property type="status" value="NOT_ANNOTATED_CDS"/>
    <property type="molecule type" value="Genomic_DNA"/>
</dbReference>
<dbReference type="FunCoup" id="Q6ZS92">
    <property type="interactions" value="43"/>
</dbReference>
<dbReference type="IntAct" id="Q6ZS92">
    <property type="interactions" value="1"/>
</dbReference>
<dbReference type="GlyGen" id="Q6ZS92">
    <property type="glycosylation" value="1 site, 1 O-linked glycan (1 site)"/>
</dbReference>
<dbReference type="BioMuta" id="-"/>
<dbReference type="neXtProt" id="NX_Q6ZS92"/>
<dbReference type="InParanoid" id="Q6ZS92"/>
<dbReference type="PAN-GO" id="Q6ZS92">
    <property type="GO annotations" value="0 GO annotations based on evolutionary models"/>
</dbReference>
<dbReference type="PathwayCommons" id="Q6ZS92"/>
<dbReference type="Pharos" id="Q6ZS92">
    <property type="development level" value="Tdark"/>
</dbReference>
<dbReference type="Proteomes" id="UP000005640">
    <property type="component" value="Unplaced"/>
</dbReference>
<dbReference type="RNAct" id="Q6ZS92">
    <property type="molecule type" value="protein"/>
</dbReference>